<keyword id="KW-0050">Antiport</keyword>
<keyword id="KW-1003">Cell membrane</keyword>
<keyword id="KW-0375">Hydrogen ion transport</keyword>
<keyword id="KW-0406">Ion transport</keyword>
<keyword id="KW-0472">Membrane</keyword>
<keyword id="KW-0915">Sodium</keyword>
<keyword id="KW-0739">Sodium transport</keyword>
<keyword id="KW-0812">Transmembrane</keyword>
<keyword id="KW-1133">Transmembrane helix</keyword>
<keyword id="KW-0813">Transport</keyword>
<reference key="1">
    <citation type="journal article" date="2007" name="PLoS ONE">
        <title>Molecular correlates of host specialization in Staphylococcus aureus.</title>
        <authorList>
            <person name="Herron-Olson L."/>
            <person name="Fitzgerald J.R."/>
            <person name="Musser J.M."/>
            <person name="Kapur V."/>
        </authorList>
    </citation>
    <scope>NUCLEOTIDE SEQUENCE [LARGE SCALE GENOMIC DNA]</scope>
    <source>
        <strain>bovine RF122 / ET3-1</strain>
    </source>
</reference>
<evidence type="ECO:0000250" key="1"/>
<evidence type="ECO:0000255" key="2"/>
<evidence type="ECO:0000305" key="3"/>
<organism>
    <name type="scientific">Staphylococcus aureus (strain bovine RF122 / ET3-1)</name>
    <dbReference type="NCBI Taxonomy" id="273036"/>
    <lineage>
        <taxon>Bacteria</taxon>
        <taxon>Bacillati</taxon>
        <taxon>Bacillota</taxon>
        <taxon>Bacilli</taxon>
        <taxon>Bacillales</taxon>
        <taxon>Staphylococcaceae</taxon>
        <taxon>Staphylococcus</taxon>
    </lineage>
</organism>
<sequence length="159" mass="18333">MAVQLVLNFIIAVFWLFVTNSYTTNNFVLGFIFGLVLVYLLHRVLPGRFYVITLYRIIKLIIIFLIELIKANFDVLKIIIKPSIKNEPGFFVYHTDLKKDWQIVLLSNLITLTPGTVVLGVSDDRTKIYIHAIDFSTKEQEVESIKTSLEKIVREVGEI</sequence>
<proteinExistence type="inferred from homology"/>
<accession>Q2YWT8</accession>
<comment type="function">
    <text evidence="1">Mnh complex is a Na(+)/H(+) antiporter involved in Na(+) excretion.</text>
</comment>
<comment type="subunit">
    <text evidence="1">May form a heterooligomeric complex that consists of seven subunits: mnhA1, mnhB1, mnhC1, mnhD1, mnhE1, mnhF1 and mnhG1.</text>
</comment>
<comment type="subcellular location">
    <subcellularLocation>
        <location evidence="3">Cell membrane</location>
        <topology evidence="3">Multi-pass membrane protein</topology>
    </subcellularLocation>
</comment>
<comment type="similarity">
    <text evidence="3">Belongs to the CPA3 antiporters (TC 2.A.63) subunit E family.</text>
</comment>
<protein>
    <recommendedName>
        <fullName>Na(+)/H(+) antiporter subunit E1</fullName>
    </recommendedName>
    <alternativeName>
        <fullName>Mnh complex subunit E1</fullName>
    </alternativeName>
</protein>
<dbReference type="EMBL" id="AJ938182">
    <property type="protein sequence ID" value="CAI80503.1"/>
    <property type="molecule type" value="Genomic_DNA"/>
</dbReference>
<dbReference type="RefSeq" id="WP_000290673.1">
    <property type="nucleotide sequence ID" value="NC_007622.1"/>
</dbReference>
<dbReference type="SMR" id="Q2YWT8"/>
<dbReference type="KEGG" id="sab:SAB0815c"/>
<dbReference type="HOGENOM" id="CLU_086615_3_2_9"/>
<dbReference type="GO" id="GO:0005886">
    <property type="term" value="C:plasma membrane"/>
    <property type="evidence" value="ECO:0007669"/>
    <property type="project" value="UniProtKB-SubCell"/>
</dbReference>
<dbReference type="GO" id="GO:0015297">
    <property type="term" value="F:antiporter activity"/>
    <property type="evidence" value="ECO:0007669"/>
    <property type="project" value="UniProtKB-KW"/>
</dbReference>
<dbReference type="GO" id="GO:0008324">
    <property type="term" value="F:monoatomic cation transmembrane transporter activity"/>
    <property type="evidence" value="ECO:0007669"/>
    <property type="project" value="InterPro"/>
</dbReference>
<dbReference type="GO" id="GO:1902600">
    <property type="term" value="P:proton transmembrane transport"/>
    <property type="evidence" value="ECO:0007669"/>
    <property type="project" value="UniProtKB-KW"/>
</dbReference>
<dbReference type="GO" id="GO:0006814">
    <property type="term" value="P:sodium ion transport"/>
    <property type="evidence" value="ECO:0007669"/>
    <property type="project" value="UniProtKB-KW"/>
</dbReference>
<dbReference type="InterPro" id="IPR004847">
    <property type="entry name" value="Antiport_suE1"/>
</dbReference>
<dbReference type="InterPro" id="IPR002758">
    <property type="entry name" value="Cation_antiport_E"/>
</dbReference>
<dbReference type="NCBIfam" id="TIGR00942">
    <property type="entry name" value="2a6301s05"/>
    <property type="match status" value="1"/>
</dbReference>
<dbReference type="NCBIfam" id="NF009291">
    <property type="entry name" value="PRK12651.1-1"/>
    <property type="match status" value="1"/>
</dbReference>
<dbReference type="PANTHER" id="PTHR34584">
    <property type="entry name" value="NA(+)/H(+) ANTIPORTER SUBUNIT E1"/>
    <property type="match status" value="1"/>
</dbReference>
<dbReference type="PANTHER" id="PTHR34584:SF1">
    <property type="entry name" value="NA(+)_H(+) ANTIPORTER SUBUNIT E1"/>
    <property type="match status" value="1"/>
</dbReference>
<dbReference type="Pfam" id="PF01899">
    <property type="entry name" value="MNHE"/>
    <property type="match status" value="1"/>
</dbReference>
<dbReference type="PIRSF" id="PIRSF019239">
    <property type="entry name" value="MrpE"/>
    <property type="match status" value="1"/>
</dbReference>
<name>MNHE1_STAAB</name>
<feature type="chain" id="PRO_0000372141" description="Na(+)/H(+) antiporter subunit E1">
    <location>
        <begin position="1"/>
        <end position="159"/>
    </location>
</feature>
<feature type="transmembrane region" description="Helical" evidence="2">
    <location>
        <begin position="1"/>
        <end position="21"/>
    </location>
</feature>
<feature type="transmembrane region" description="Helical" evidence="2">
    <location>
        <begin position="27"/>
        <end position="47"/>
    </location>
</feature>
<feature type="transmembrane region" description="Helical" evidence="2">
    <location>
        <begin position="49"/>
        <end position="69"/>
    </location>
</feature>
<feature type="transmembrane region" description="Helical" evidence="2">
    <location>
        <begin position="101"/>
        <end position="121"/>
    </location>
</feature>
<gene>
    <name type="primary">mnhE1</name>
    <name type="ordered locus">SAB0815c</name>
</gene>